<comment type="catalytic activity">
    <reaction>
        <text>Hydrolysis of terminal, non-reducing alpha-D-galactose residues in alpha-D-galactosides, including galactose oligosaccharides, galactomannans and galactolipids.</text>
        <dbReference type="EC" id="3.2.1.22"/>
    </reaction>
</comment>
<comment type="cofactor">
    <cofactor evidence="1">
        <name>Mn(2+)</name>
        <dbReference type="ChEBI" id="CHEBI:29035"/>
    </cofactor>
    <text evidence="1">Binds 1 Mn(2+) ion per subunit.</text>
</comment>
<comment type="cofactor">
    <cofactor evidence="1">
        <name>NAD(+)</name>
        <dbReference type="ChEBI" id="CHEBI:57540"/>
    </cofactor>
    <text evidence="1">Binds 1 NAD(+) per subunit.</text>
</comment>
<comment type="subunit">
    <text evidence="1">Homodimer.</text>
</comment>
<comment type="similarity">
    <text evidence="2">Belongs to the glycosyl hydrolase 4 family.</text>
</comment>
<keyword id="KW-0119">Carbohydrate metabolism</keyword>
<keyword id="KW-0326">Glycosidase</keyword>
<keyword id="KW-0378">Hydrolase</keyword>
<keyword id="KW-0464">Manganese</keyword>
<keyword id="KW-0479">Metal-binding</keyword>
<keyword id="KW-0520">NAD</keyword>
<keyword id="KW-0614">Plasmid</keyword>
<keyword id="KW-1185">Reference proteome</keyword>
<organism>
    <name type="scientific">Rhizobium meliloti (strain 1021)</name>
    <name type="common">Ensifer meliloti</name>
    <name type="synonym">Sinorhizobium meliloti</name>
    <dbReference type="NCBI Taxonomy" id="266834"/>
    <lineage>
        <taxon>Bacteria</taxon>
        <taxon>Pseudomonadati</taxon>
        <taxon>Pseudomonadota</taxon>
        <taxon>Alphaproteobacteria</taxon>
        <taxon>Hyphomicrobiales</taxon>
        <taxon>Rhizobiaceae</taxon>
        <taxon>Sinorhizobium/Ensifer group</taxon>
        <taxon>Sinorhizobium</taxon>
    </lineage>
</organism>
<protein>
    <recommendedName>
        <fullName>Alpha-galactosidase</fullName>
        <ecNumber>3.2.1.22</ecNumber>
    </recommendedName>
    <alternativeName>
        <fullName>Melibiase</fullName>
    </alternativeName>
</protein>
<geneLocation type="plasmid">
    <name>pSymB</name>
    <name>megaplasmid 2</name>
</geneLocation>
<sequence length="490" mass="54605">MASFKIAIIGAGSIGFTKKLFTDILSVPELRDVEFALTDLSEHNLAMIKSILDRIVEANELPTRVTATTDRRKALEGARYIISCVRVGGLEAYADDIRIPLKYGVDQCVGDTICAGGILYGQRNIPVILDFCKDIREVAEPGAKFLNYANPMAMNTWAAIEYGKVDTVGLCHGVQHGAEQIAEILGARDGELDYICSGINHQTWFVDVRLNGRKVGKDELVAAFEAHPVFSKQEKLRIDVLKRFGVYSTESNGHLSEYLPWYRKRPDEISRWIDMSDWIHGETGGYLRYSTETRNWFETEYPRFLEEAGRPLETIRRSNEHASRILEALETGRVYRGHFNVKNNGVITNLPADAIIESPGFVDRFGINMVAGITLPEACAATCISSVNVQRMSVHAAITGDIDLLKLAVLHDPLVGAICTPEEVWQMVDEMVVAQAKWLPQYAHAIDAAKERLARATVATREWKGAARREVRSIEEIRAEKEAAKLRAAG</sequence>
<evidence type="ECO:0000250" key="1"/>
<evidence type="ECO:0000305" key="2"/>
<dbReference type="EC" id="3.2.1.22"/>
<dbReference type="EMBL" id="AF119834">
    <property type="protein sequence ID" value="AAD26273.1"/>
    <property type="molecule type" value="Genomic_DNA"/>
</dbReference>
<dbReference type="EMBL" id="AL591985">
    <property type="protein sequence ID" value="CAC49967.1"/>
    <property type="molecule type" value="Genomic_DNA"/>
</dbReference>
<dbReference type="PIR" id="G96037">
    <property type="entry name" value="G96037"/>
</dbReference>
<dbReference type="RefSeq" id="NP_438107.1">
    <property type="nucleotide sequence ID" value="NC_003078.1"/>
</dbReference>
<dbReference type="RefSeq" id="WP_003527988.1">
    <property type="nucleotide sequence ID" value="NC_003078.1"/>
</dbReference>
<dbReference type="SMR" id="Q9X4Y0"/>
<dbReference type="CAZy" id="GH4">
    <property type="family name" value="Glycoside Hydrolase Family 4"/>
</dbReference>
<dbReference type="EnsemblBacteria" id="CAC49967">
    <property type="protein sequence ID" value="CAC49967"/>
    <property type="gene ID" value="SM_b21648"/>
</dbReference>
<dbReference type="GeneID" id="89578888"/>
<dbReference type="KEGG" id="sme:SM_b21648"/>
<dbReference type="PATRIC" id="fig|266834.11.peg.6494"/>
<dbReference type="eggNOG" id="COG1486">
    <property type="taxonomic scope" value="Bacteria"/>
</dbReference>
<dbReference type="HOGENOM" id="CLU_045951_1_1_5"/>
<dbReference type="OrthoDB" id="9767022at2"/>
<dbReference type="Proteomes" id="UP000001976">
    <property type="component" value="Plasmid pSymB"/>
</dbReference>
<dbReference type="GO" id="GO:0004557">
    <property type="term" value="F:alpha-galactosidase activity"/>
    <property type="evidence" value="ECO:0007669"/>
    <property type="project" value="UniProtKB-EC"/>
</dbReference>
<dbReference type="GO" id="GO:0046872">
    <property type="term" value="F:metal ion binding"/>
    <property type="evidence" value="ECO:0007669"/>
    <property type="project" value="UniProtKB-KW"/>
</dbReference>
<dbReference type="GO" id="GO:0016616">
    <property type="term" value="F:oxidoreductase activity, acting on the CH-OH group of donors, NAD or NADP as acceptor"/>
    <property type="evidence" value="ECO:0007669"/>
    <property type="project" value="InterPro"/>
</dbReference>
<dbReference type="GO" id="GO:0005975">
    <property type="term" value="P:carbohydrate metabolic process"/>
    <property type="evidence" value="ECO:0007669"/>
    <property type="project" value="InterPro"/>
</dbReference>
<dbReference type="CDD" id="cd05297">
    <property type="entry name" value="GH4_alpha_glucosidase_galactosidase"/>
    <property type="match status" value="1"/>
</dbReference>
<dbReference type="Gene3D" id="3.90.1820.10">
    <property type="entry name" value="AglA-like glucosidase"/>
    <property type="match status" value="1"/>
</dbReference>
<dbReference type="InterPro" id="IPR053715">
    <property type="entry name" value="GH4_Enzyme_sf"/>
</dbReference>
<dbReference type="InterPro" id="IPR019802">
    <property type="entry name" value="GlycHydrolase_4_CS"/>
</dbReference>
<dbReference type="InterPro" id="IPR001088">
    <property type="entry name" value="Glyco_hydro_4"/>
</dbReference>
<dbReference type="InterPro" id="IPR022616">
    <property type="entry name" value="Glyco_hydro_4_C"/>
</dbReference>
<dbReference type="InterPro" id="IPR015955">
    <property type="entry name" value="Lactate_DH/Glyco_Ohase_4_C"/>
</dbReference>
<dbReference type="InterPro" id="IPR036291">
    <property type="entry name" value="NAD(P)-bd_dom_sf"/>
</dbReference>
<dbReference type="NCBIfam" id="NF011657">
    <property type="entry name" value="PRK15076.1"/>
    <property type="match status" value="1"/>
</dbReference>
<dbReference type="PANTHER" id="PTHR32092">
    <property type="entry name" value="6-PHOSPHO-BETA-GLUCOSIDASE-RELATED"/>
    <property type="match status" value="1"/>
</dbReference>
<dbReference type="PANTHER" id="PTHR32092:SF6">
    <property type="entry name" value="ALPHA-GALACTOSIDASE"/>
    <property type="match status" value="1"/>
</dbReference>
<dbReference type="Pfam" id="PF02056">
    <property type="entry name" value="Glyco_hydro_4"/>
    <property type="match status" value="1"/>
</dbReference>
<dbReference type="Pfam" id="PF11975">
    <property type="entry name" value="Glyco_hydro_4C"/>
    <property type="match status" value="1"/>
</dbReference>
<dbReference type="PRINTS" id="PR00732">
    <property type="entry name" value="GLHYDRLASE4"/>
</dbReference>
<dbReference type="SUPFAM" id="SSF56327">
    <property type="entry name" value="LDH C-terminal domain-like"/>
    <property type="match status" value="1"/>
</dbReference>
<dbReference type="SUPFAM" id="SSF51735">
    <property type="entry name" value="NAD(P)-binding Rossmann-fold domains"/>
    <property type="match status" value="1"/>
</dbReference>
<dbReference type="PROSITE" id="PS01324">
    <property type="entry name" value="GLYCOSYL_HYDROL_F4"/>
    <property type="match status" value="1"/>
</dbReference>
<reference key="1">
    <citation type="journal article" date="1998" name="J. Bacteriol.">
        <title>Alpha-galactoside uptake in Rhizobium meliloti: isolation and characterization of agpA, a gene encoding a periplasmic binding protein required for melibiose and raffinose utilization.</title>
        <authorList>
            <person name="Gage D.J."/>
            <person name="Long S.R."/>
        </authorList>
    </citation>
    <scope>NUCLEOTIDE SEQUENCE [GENOMIC DNA]</scope>
    <source>
        <strain>1021</strain>
    </source>
</reference>
<reference key="2">
    <citation type="journal article" date="2001" name="Proc. Natl. Acad. Sci. U.S.A.">
        <title>The complete sequence of the 1,683-kb pSymB megaplasmid from the N2-fixing endosymbiont Sinorhizobium meliloti.</title>
        <authorList>
            <person name="Finan T.M."/>
            <person name="Weidner S."/>
            <person name="Wong K."/>
            <person name="Buhrmester J."/>
            <person name="Chain P."/>
            <person name="Vorhoelter F.J."/>
            <person name="Hernandez-Lucas I."/>
            <person name="Becker A."/>
            <person name="Cowie A."/>
            <person name="Gouzy J."/>
            <person name="Golding B."/>
            <person name="Puehler A."/>
        </authorList>
    </citation>
    <scope>NUCLEOTIDE SEQUENCE [LARGE SCALE GENOMIC DNA]</scope>
    <source>
        <strain>1021</strain>
    </source>
</reference>
<reference key="3">
    <citation type="journal article" date="2001" name="Science">
        <title>The composite genome of the legume symbiont Sinorhizobium meliloti.</title>
        <authorList>
            <person name="Galibert F."/>
            <person name="Finan T.M."/>
            <person name="Long S.R."/>
            <person name="Puehler A."/>
            <person name="Abola P."/>
            <person name="Ampe F."/>
            <person name="Barloy-Hubler F."/>
            <person name="Barnett M.J."/>
            <person name="Becker A."/>
            <person name="Boistard P."/>
            <person name="Bothe G."/>
            <person name="Boutry M."/>
            <person name="Bowser L."/>
            <person name="Buhrmester J."/>
            <person name="Cadieu E."/>
            <person name="Capela D."/>
            <person name="Chain P."/>
            <person name="Cowie A."/>
            <person name="Davis R.W."/>
            <person name="Dreano S."/>
            <person name="Federspiel N.A."/>
            <person name="Fisher R.F."/>
            <person name="Gloux S."/>
            <person name="Godrie T."/>
            <person name="Goffeau A."/>
            <person name="Golding B."/>
            <person name="Gouzy J."/>
            <person name="Gurjal M."/>
            <person name="Hernandez-Lucas I."/>
            <person name="Hong A."/>
            <person name="Huizar L."/>
            <person name="Hyman R.W."/>
            <person name="Jones T."/>
            <person name="Kahn D."/>
            <person name="Kahn M.L."/>
            <person name="Kalman S."/>
            <person name="Keating D.H."/>
            <person name="Kiss E."/>
            <person name="Komp C."/>
            <person name="Lelaure V."/>
            <person name="Masuy D."/>
            <person name="Palm C."/>
            <person name="Peck M.C."/>
            <person name="Pohl T.M."/>
            <person name="Portetelle D."/>
            <person name="Purnelle B."/>
            <person name="Ramsperger U."/>
            <person name="Surzycki R."/>
            <person name="Thebault P."/>
            <person name="Vandenbol M."/>
            <person name="Vorhoelter F.J."/>
            <person name="Weidner S."/>
            <person name="Wells D.H."/>
            <person name="Wong K."/>
            <person name="Yeh K.-C."/>
            <person name="Batut J."/>
        </authorList>
    </citation>
    <scope>NUCLEOTIDE SEQUENCE [LARGE SCALE GENOMIC DNA]</scope>
    <source>
        <strain>1021</strain>
    </source>
</reference>
<proteinExistence type="inferred from homology"/>
<feature type="chain" id="PRO_0000169853" description="Alpha-galactosidase">
    <location>
        <begin position="1"/>
        <end position="490"/>
    </location>
</feature>
<feature type="active site" description="Proton donor" evidence="1">
    <location>
        <position position="172"/>
    </location>
</feature>
<feature type="active site" description="Proton acceptor" evidence="1">
    <location>
        <position position="258"/>
    </location>
</feature>
<feature type="binding site" evidence="1">
    <location>
        <begin position="4"/>
        <end position="70"/>
    </location>
    <ligand>
        <name>NAD(+)</name>
        <dbReference type="ChEBI" id="CHEBI:57540"/>
    </ligand>
</feature>
<feature type="binding site" evidence="1">
    <location>
        <position position="150"/>
    </location>
    <ligand>
        <name>substrate</name>
    </ligand>
</feature>
<feature type="binding site" evidence="1">
    <location>
        <position position="171"/>
    </location>
    <ligand>
        <name>Mn(2+)</name>
        <dbReference type="ChEBI" id="CHEBI:29035"/>
    </ligand>
</feature>
<feature type="binding site" evidence="1">
    <location>
        <position position="201"/>
    </location>
    <ligand>
        <name>Mn(2+)</name>
        <dbReference type="ChEBI" id="CHEBI:29035"/>
    </ligand>
</feature>
<accession>Q9X4Y0</accession>
<name>AGAL_RHIME</name>
<gene>
    <name type="primary">melA</name>
    <name type="ordered locus">RB1568</name>
    <name type="ORF">SMb21648</name>
</gene>